<accession>P0AEE7</accession>
<accession>P02927</accession>
<accession>P17775</accession>
<feature type="signal peptide" evidence="1">
    <location>
        <begin position="1"/>
        <end position="23"/>
    </location>
</feature>
<feature type="chain" id="PRO_0000043345" description="D-galactose/methyl-galactoside binding periplasmic protein MglB">
    <location>
        <begin position="24"/>
        <end position="332"/>
    </location>
</feature>
<feature type="binding site" evidence="3">
    <location>
        <position position="37"/>
    </location>
    <ligand>
        <name>beta-D-galactose</name>
        <dbReference type="ChEBI" id="CHEBI:27667"/>
    </ligand>
</feature>
<feature type="binding site" evidence="2">
    <location>
        <position position="37"/>
    </location>
    <ligand>
        <name>beta-D-glucose</name>
        <dbReference type="ChEBI" id="CHEBI:15903"/>
    </ligand>
</feature>
<feature type="binding site" evidence="3">
    <location>
        <position position="114"/>
    </location>
    <ligand>
        <name>beta-D-galactose</name>
        <dbReference type="ChEBI" id="CHEBI:27667"/>
    </ligand>
</feature>
<feature type="binding site" evidence="2">
    <location>
        <position position="114"/>
    </location>
    <ligand>
        <name>beta-D-glucose</name>
        <dbReference type="ChEBI" id="CHEBI:15903"/>
    </ligand>
</feature>
<feature type="binding site" evidence="2">
    <location>
        <position position="157"/>
    </location>
    <ligand>
        <name>Ca(2+)</name>
        <dbReference type="ChEBI" id="CHEBI:29108"/>
    </ligand>
</feature>
<feature type="binding site" evidence="2">
    <location>
        <position position="159"/>
    </location>
    <ligand>
        <name>Ca(2+)</name>
        <dbReference type="ChEBI" id="CHEBI:29108"/>
    </ligand>
</feature>
<feature type="binding site" evidence="2">
    <location>
        <position position="161"/>
    </location>
    <ligand>
        <name>Ca(2+)</name>
        <dbReference type="ChEBI" id="CHEBI:29108"/>
    </ligand>
</feature>
<feature type="binding site" evidence="2">
    <location>
        <position position="163"/>
    </location>
    <ligand>
        <name>Ca(2+)</name>
        <dbReference type="ChEBI" id="CHEBI:29108"/>
    </ligand>
</feature>
<feature type="binding site" evidence="2">
    <location>
        <position position="165"/>
    </location>
    <ligand>
        <name>Ca(2+)</name>
        <dbReference type="ChEBI" id="CHEBI:29108"/>
    </ligand>
</feature>
<feature type="binding site" evidence="3">
    <location>
        <position position="175"/>
    </location>
    <ligand>
        <name>beta-D-galactose</name>
        <dbReference type="ChEBI" id="CHEBI:27667"/>
    </ligand>
</feature>
<feature type="binding site" evidence="2">
    <location>
        <position position="175"/>
    </location>
    <ligand>
        <name>beta-D-glucose</name>
        <dbReference type="ChEBI" id="CHEBI:15903"/>
    </ligand>
</feature>
<feature type="binding site" evidence="3">
    <location>
        <position position="177"/>
    </location>
    <ligand>
        <name>beta-D-galactose</name>
        <dbReference type="ChEBI" id="CHEBI:27667"/>
    </ligand>
</feature>
<feature type="binding site" evidence="2">
    <location>
        <position position="177"/>
    </location>
    <ligand>
        <name>beta-D-glucose</name>
        <dbReference type="ChEBI" id="CHEBI:15903"/>
    </ligand>
</feature>
<feature type="binding site" evidence="3">
    <location>
        <position position="181"/>
    </location>
    <ligand>
        <name>beta-D-galactose</name>
        <dbReference type="ChEBI" id="CHEBI:27667"/>
    </ligand>
</feature>
<feature type="binding site" evidence="2">
    <location>
        <position position="181"/>
    </location>
    <ligand>
        <name>beta-D-glucose</name>
        <dbReference type="ChEBI" id="CHEBI:15903"/>
    </ligand>
</feature>
<feature type="binding site" evidence="2">
    <location>
        <position position="228"/>
    </location>
    <ligand>
        <name>Ca(2+)</name>
        <dbReference type="ChEBI" id="CHEBI:29108"/>
    </ligand>
</feature>
<feature type="binding site" evidence="3">
    <location>
        <position position="234"/>
    </location>
    <ligand>
        <name>beta-D-galactose</name>
        <dbReference type="ChEBI" id="CHEBI:27667"/>
    </ligand>
</feature>
<feature type="binding site" evidence="2">
    <location>
        <position position="234"/>
    </location>
    <ligand>
        <name>beta-D-glucose</name>
        <dbReference type="ChEBI" id="CHEBI:15903"/>
    </ligand>
</feature>
<feature type="binding site" evidence="3">
    <location>
        <position position="259"/>
    </location>
    <ligand>
        <name>beta-D-galactose</name>
        <dbReference type="ChEBI" id="CHEBI:27667"/>
    </ligand>
</feature>
<feature type="binding site" evidence="2">
    <location>
        <position position="259"/>
    </location>
    <ligand>
        <name>beta-D-glucose</name>
        <dbReference type="ChEBI" id="CHEBI:15903"/>
    </ligand>
</feature>
<feature type="binding site" evidence="3">
    <location>
        <position position="279"/>
    </location>
    <ligand>
        <name>beta-D-galactose</name>
        <dbReference type="ChEBI" id="CHEBI:27667"/>
    </ligand>
</feature>
<feature type="binding site" evidence="2">
    <location>
        <position position="279"/>
    </location>
    <ligand>
        <name>beta-D-glucose</name>
        <dbReference type="ChEBI" id="CHEBI:15903"/>
    </ligand>
</feature>
<feature type="site" description="Interacts with membrane-bound trg signal transducer" evidence="1">
    <location>
        <position position="97"/>
    </location>
</feature>
<evidence type="ECO:0000250" key="1"/>
<evidence type="ECO:0000250" key="2">
    <source>
        <dbReference type="UniProtKB" id="P0AEE5"/>
    </source>
</evidence>
<evidence type="ECO:0000250" key="3">
    <source>
        <dbReference type="UniProtKB" id="P23905"/>
    </source>
</evidence>
<evidence type="ECO:0000305" key="4"/>
<comment type="function">
    <text evidence="2">Part of the ABC transporter complex MglABC involved in galactose/methyl galactoside import (By similarity). In addition, binds D-galactose and D-glucose and plays a role in the chemotaxis towards these two sugars by interacting with the Trg chemoreceptor (By similarity).</text>
</comment>
<comment type="subunit">
    <text evidence="2">The ABC transporter complex is composed of one ATP-binding protein (MglA), two transmembrane proteins (MglC) and a solute-binding protein (MglB).</text>
</comment>
<comment type="subcellular location">
    <subcellularLocation>
        <location evidence="1">Periplasm</location>
    </subcellularLocation>
</comment>
<comment type="domain">
    <text evidence="1">The calcium-binding site is structurally similar to that of EF-hand proteins, but is in two parts, with the last calcium ligand provided by Glu-228.</text>
</comment>
<comment type="similarity">
    <text evidence="4">Belongs to the bacterial solute-binding protein 2 family.</text>
</comment>
<sequence>MNKKVLTLSAVMASMLFGAAAHAADTRIGVTIYKYDDNFMSVVRKAIEQDAKAAPDVQLLMNDSQNDQSKQNDQIDVLLAKGVKALAINLVDPAAAGTVIEKARGQNVPVVFFNKEPSRKALDSYDKAYYVGTDSKESGIIQGDLIAKHWAANQGWDLNKDGQIQFVLLKGEPGHPDAEARTTYVIKELNDKGIKTEQLQLDTAMWDTAQAKDKMDAWLSGPNANKIEVVIANNDAMAMGAVEALKAHNKSSIPVFGVDALPEALALVKSGALAGTVLNDANNQAKATFDLAKNLADGKGAADGTNWKIDNKVVRVPYVGVDKDNLAEFSKK</sequence>
<proteinExistence type="inferred from homology"/>
<reference key="1">
    <citation type="journal article" date="2002" name="Nucleic Acids Res.">
        <title>Genome sequence of Shigella flexneri 2a: insights into pathogenicity through comparison with genomes of Escherichia coli K12 and O157.</title>
        <authorList>
            <person name="Jin Q."/>
            <person name="Yuan Z."/>
            <person name="Xu J."/>
            <person name="Wang Y."/>
            <person name="Shen Y."/>
            <person name="Lu W."/>
            <person name="Wang J."/>
            <person name="Liu H."/>
            <person name="Yang J."/>
            <person name="Yang F."/>
            <person name="Zhang X."/>
            <person name="Zhang J."/>
            <person name="Yang G."/>
            <person name="Wu H."/>
            <person name="Qu D."/>
            <person name="Dong J."/>
            <person name="Sun L."/>
            <person name="Xue Y."/>
            <person name="Zhao A."/>
            <person name="Gao Y."/>
            <person name="Zhu J."/>
            <person name="Kan B."/>
            <person name="Ding K."/>
            <person name="Chen S."/>
            <person name="Cheng H."/>
            <person name="Yao Z."/>
            <person name="He B."/>
            <person name="Chen R."/>
            <person name="Ma D."/>
            <person name="Qiang B."/>
            <person name="Wen Y."/>
            <person name="Hou Y."/>
            <person name="Yu J."/>
        </authorList>
    </citation>
    <scope>NUCLEOTIDE SEQUENCE [LARGE SCALE GENOMIC DNA]</scope>
    <source>
        <strain>301 / Serotype 2a</strain>
    </source>
</reference>
<reference key="2">
    <citation type="journal article" date="2003" name="Infect. Immun.">
        <title>Complete genome sequence and comparative genomics of Shigella flexneri serotype 2a strain 2457T.</title>
        <authorList>
            <person name="Wei J."/>
            <person name="Goldberg M.B."/>
            <person name="Burland V."/>
            <person name="Venkatesan M.M."/>
            <person name="Deng W."/>
            <person name="Fournier G."/>
            <person name="Mayhew G.F."/>
            <person name="Plunkett G. III"/>
            <person name="Rose D.J."/>
            <person name="Darling A."/>
            <person name="Mau B."/>
            <person name="Perna N.T."/>
            <person name="Payne S.M."/>
            <person name="Runyen-Janecky L.J."/>
            <person name="Zhou S."/>
            <person name="Schwartz D.C."/>
            <person name="Blattner F.R."/>
        </authorList>
    </citation>
    <scope>NUCLEOTIDE SEQUENCE [LARGE SCALE GENOMIC DNA]</scope>
    <source>
        <strain>ATCC 700930 / 2457T / Serotype 2a</strain>
    </source>
</reference>
<gene>
    <name type="primary">mglB</name>
    <name type="ordered locus">SF2235</name>
    <name type="ordered locus">S2364</name>
</gene>
<keyword id="KW-0106">Calcium</keyword>
<keyword id="KW-0145">Chemotaxis</keyword>
<keyword id="KW-0479">Metal-binding</keyword>
<keyword id="KW-0574">Periplasm</keyword>
<keyword id="KW-1185">Reference proteome</keyword>
<keyword id="KW-0732">Signal</keyword>
<keyword id="KW-0762">Sugar transport</keyword>
<keyword id="KW-0813">Transport</keyword>
<organism>
    <name type="scientific">Shigella flexneri</name>
    <dbReference type="NCBI Taxonomy" id="623"/>
    <lineage>
        <taxon>Bacteria</taxon>
        <taxon>Pseudomonadati</taxon>
        <taxon>Pseudomonadota</taxon>
        <taxon>Gammaproteobacteria</taxon>
        <taxon>Enterobacterales</taxon>
        <taxon>Enterobacteriaceae</taxon>
        <taxon>Shigella</taxon>
    </lineage>
</organism>
<protein>
    <recommendedName>
        <fullName evidence="2">D-galactose/methyl-galactoside binding periplasmic protein MglB</fullName>
    </recommendedName>
    <alternativeName>
        <fullName>D-galactose-binding periplasmic protein</fullName>
        <shortName>GBP</shortName>
    </alternativeName>
    <alternativeName>
        <fullName>D-galactose/D-glucose-binding protein</fullName>
        <shortName>GGBP</shortName>
    </alternativeName>
</protein>
<dbReference type="EMBL" id="AE005674">
    <property type="protein sequence ID" value="AAN43756.1"/>
    <property type="molecule type" value="Genomic_DNA"/>
</dbReference>
<dbReference type="EMBL" id="AE014073">
    <property type="protein sequence ID" value="AAP17573.1"/>
    <property type="molecule type" value="Genomic_DNA"/>
</dbReference>
<dbReference type="RefSeq" id="NP_708049.1">
    <property type="nucleotide sequence ID" value="NC_004337.2"/>
</dbReference>
<dbReference type="RefSeq" id="WP_001036964.1">
    <property type="nucleotide sequence ID" value="NZ_WPGW01000017.1"/>
</dbReference>
<dbReference type="BMRB" id="P0AEE7"/>
<dbReference type="SMR" id="P0AEE7"/>
<dbReference type="STRING" id="198214.SF2235"/>
<dbReference type="PaxDb" id="198214-SF2235"/>
<dbReference type="GeneID" id="1027319"/>
<dbReference type="GeneID" id="93775032"/>
<dbReference type="KEGG" id="sfl:SF2235"/>
<dbReference type="KEGG" id="sfx:S2364"/>
<dbReference type="PATRIC" id="fig|198214.7.peg.2677"/>
<dbReference type="HOGENOM" id="CLU_037628_3_1_6"/>
<dbReference type="Proteomes" id="UP000001006">
    <property type="component" value="Chromosome"/>
</dbReference>
<dbReference type="Proteomes" id="UP000002673">
    <property type="component" value="Chromosome"/>
</dbReference>
<dbReference type="GO" id="GO:0030288">
    <property type="term" value="C:outer membrane-bounded periplasmic space"/>
    <property type="evidence" value="ECO:0007669"/>
    <property type="project" value="TreeGrafter"/>
</dbReference>
<dbReference type="GO" id="GO:0030246">
    <property type="term" value="F:carbohydrate binding"/>
    <property type="evidence" value="ECO:0007669"/>
    <property type="project" value="InterPro"/>
</dbReference>
<dbReference type="GO" id="GO:0046872">
    <property type="term" value="F:metal ion binding"/>
    <property type="evidence" value="ECO:0007669"/>
    <property type="project" value="UniProtKB-KW"/>
</dbReference>
<dbReference type="GO" id="GO:0006935">
    <property type="term" value="P:chemotaxis"/>
    <property type="evidence" value="ECO:0007669"/>
    <property type="project" value="UniProtKB-KW"/>
</dbReference>
<dbReference type="CDD" id="cd01539">
    <property type="entry name" value="PBP1_GGBP"/>
    <property type="match status" value="1"/>
</dbReference>
<dbReference type="FunFam" id="3.40.50.2300:FF:000038">
    <property type="entry name" value="Galactose ABC transporter substrate-binding protein"/>
    <property type="match status" value="1"/>
</dbReference>
<dbReference type="Gene3D" id="3.40.50.2300">
    <property type="match status" value="2"/>
</dbReference>
<dbReference type="InterPro" id="IPR050555">
    <property type="entry name" value="Bact_Solute-Bind_Prot2"/>
</dbReference>
<dbReference type="InterPro" id="IPR044085">
    <property type="entry name" value="MglB-like_PBP1"/>
</dbReference>
<dbReference type="InterPro" id="IPR028082">
    <property type="entry name" value="Peripla_BP_I"/>
</dbReference>
<dbReference type="InterPro" id="IPR025997">
    <property type="entry name" value="SBP_2_dom"/>
</dbReference>
<dbReference type="NCBIfam" id="NF011924">
    <property type="entry name" value="PRK15395.1"/>
    <property type="match status" value="1"/>
</dbReference>
<dbReference type="PANTHER" id="PTHR30036:SF2">
    <property type="entry name" value="D-GALACTOSE_METHYL-GALACTOSIDE BINDING PERIPLASMIC PROTEIN MGLB"/>
    <property type="match status" value="1"/>
</dbReference>
<dbReference type="PANTHER" id="PTHR30036">
    <property type="entry name" value="D-XYLOSE-BINDING PERIPLASMIC PROTEIN"/>
    <property type="match status" value="1"/>
</dbReference>
<dbReference type="Pfam" id="PF13407">
    <property type="entry name" value="Peripla_BP_4"/>
    <property type="match status" value="1"/>
</dbReference>
<dbReference type="SUPFAM" id="SSF53822">
    <property type="entry name" value="Periplasmic binding protein-like I"/>
    <property type="match status" value="1"/>
</dbReference>
<name>MGLB_SHIFL</name>